<feature type="chain" id="PRO_0000455702" description="Intermembrane lipid transfer protein VPS13">
    <location>
        <begin position="1"/>
        <end position="3225"/>
    </location>
</feature>
<feature type="domain" description="Chorein N-terminal" evidence="2">
    <location>
        <begin position="2"/>
        <end position="115"/>
    </location>
</feature>
<feature type="domain" description="SHR-BD" evidence="2">
    <location>
        <begin position="2290"/>
        <end position="2570"/>
    </location>
</feature>
<feature type="region of interest" description="Involved in phospholipid binding" evidence="4">
    <location>
        <begin position="1"/>
        <end position="1390"/>
    </location>
</feature>
<feature type="region of interest" description="Disordered" evidence="3">
    <location>
        <begin position="1568"/>
        <end position="1610"/>
    </location>
</feature>
<feature type="region of interest" description="Disordered" evidence="3">
    <location>
        <begin position="1768"/>
        <end position="1799"/>
    </location>
</feature>
<feature type="compositionally biased region" description="Low complexity" evidence="3">
    <location>
        <begin position="1590"/>
        <end position="1610"/>
    </location>
</feature>
<feature type="compositionally biased region" description="Polar residues" evidence="3">
    <location>
        <begin position="1777"/>
        <end position="1799"/>
    </location>
</feature>
<feature type="helix" evidence="10">
    <location>
        <begin position="7"/>
        <end position="17"/>
    </location>
</feature>
<feature type="turn" evidence="10">
    <location>
        <begin position="30"/>
        <end position="32"/>
    </location>
</feature>
<feature type="strand" evidence="10">
    <location>
        <begin position="37"/>
        <end position="40"/>
    </location>
</feature>
<feature type="helix" evidence="10">
    <location>
        <begin position="48"/>
        <end position="50"/>
    </location>
</feature>
<feature type="strand" evidence="10">
    <location>
        <begin position="55"/>
        <end position="67"/>
    </location>
</feature>
<feature type="turn" evidence="10">
    <location>
        <begin position="71"/>
        <end position="75"/>
    </location>
</feature>
<feature type="strand" evidence="10">
    <location>
        <begin position="79"/>
        <end position="90"/>
    </location>
</feature>
<feature type="helix" evidence="10">
    <location>
        <begin position="136"/>
        <end position="149"/>
    </location>
</feature>
<feature type="strand" evidence="10">
    <location>
        <begin position="153"/>
        <end position="168"/>
    </location>
</feature>
<feature type="strand" evidence="10">
    <location>
        <begin position="173"/>
        <end position="187"/>
    </location>
</feature>
<feature type="strand" evidence="10">
    <location>
        <begin position="199"/>
        <end position="218"/>
    </location>
</feature>
<feature type="helix" evidence="10">
    <location>
        <begin position="237"/>
        <end position="246"/>
    </location>
</feature>
<feature type="strand" evidence="10">
    <location>
        <begin position="261"/>
        <end position="275"/>
    </location>
</feature>
<feature type="strand" evidence="10">
    <location>
        <begin position="280"/>
        <end position="282"/>
    </location>
</feature>
<feature type="strand" evidence="10">
    <location>
        <begin position="284"/>
        <end position="291"/>
    </location>
</feature>
<feature type="strand" evidence="10">
    <location>
        <begin position="294"/>
        <end position="298"/>
    </location>
</feature>
<feature type="helix" evidence="10">
    <location>
        <begin position="300"/>
        <end position="304"/>
    </location>
</feature>
<feature type="helix" evidence="10">
    <location>
        <begin position="306"/>
        <end position="323"/>
    </location>
</feature>
<feature type="strand" evidence="11">
    <location>
        <begin position="1946"/>
        <end position="1950"/>
    </location>
</feature>
<feature type="strand" evidence="11">
    <location>
        <begin position="1952"/>
        <end position="1960"/>
    </location>
</feature>
<feature type="strand" evidence="11">
    <location>
        <begin position="1979"/>
        <end position="1982"/>
    </location>
</feature>
<feature type="strand" evidence="11">
    <location>
        <begin position="1987"/>
        <end position="1990"/>
    </location>
</feature>
<feature type="strand" evidence="11">
    <location>
        <begin position="2011"/>
        <end position="2017"/>
    </location>
</feature>
<feature type="turn" evidence="11">
    <location>
        <begin position="2018"/>
        <end position="2020"/>
    </location>
</feature>
<feature type="strand" evidence="11">
    <location>
        <begin position="2024"/>
        <end position="2028"/>
    </location>
</feature>
<feature type="strand" evidence="11">
    <location>
        <begin position="2033"/>
        <end position="2040"/>
    </location>
</feature>
<feature type="strand" evidence="11">
    <location>
        <begin position="2043"/>
        <end position="2045"/>
    </location>
</feature>
<feature type="strand" evidence="11">
    <location>
        <begin position="2048"/>
        <end position="2056"/>
    </location>
</feature>
<feature type="strand" evidence="11">
    <location>
        <begin position="2062"/>
        <end position="2067"/>
    </location>
</feature>
<feature type="strand" evidence="11">
    <location>
        <begin position="2069"/>
        <end position="2074"/>
    </location>
</feature>
<feature type="strand" evidence="11">
    <location>
        <begin position="2076"/>
        <end position="2078"/>
    </location>
</feature>
<feature type="strand" evidence="11">
    <location>
        <begin position="2080"/>
        <end position="2086"/>
    </location>
</feature>
<feature type="turn" evidence="11">
    <location>
        <begin position="2087"/>
        <end position="2090"/>
    </location>
</feature>
<feature type="strand" evidence="11">
    <location>
        <begin position="2091"/>
        <end position="2098"/>
    </location>
</feature>
<feature type="strand" evidence="11">
    <location>
        <begin position="2103"/>
        <end position="2105"/>
    </location>
</feature>
<feature type="helix" evidence="11">
    <location>
        <begin position="2110"/>
        <end position="2113"/>
    </location>
</feature>
<feature type="strand" evidence="11">
    <location>
        <begin position="2114"/>
        <end position="2120"/>
    </location>
</feature>
<feature type="helix" evidence="11">
    <location>
        <begin position="2122"/>
        <end position="2124"/>
    </location>
</feature>
<feature type="helix" evidence="11">
    <location>
        <begin position="2135"/>
        <end position="2138"/>
    </location>
</feature>
<feature type="strand" evidence="11">
    <location>
        <begin position="2143"/>
        <end position="2152"/>
    </location>
</feature>
<feature type="strand" evidence="11">
    <location>
        <begin position="2157"/>
        <end position="2165"/>
    </location>
</feature>
<feature type="helix" evidence="11">
    <location>
        <begin position="2171"/>
        <end position="2174"/>
    </location>
</feature>
<feature type="strand" evidence="11">
    <location>
        <begin position="2179"/>
        <end position="2184"/>
    </location>
</feature>
<feature type="strand" evidence="11">
    <location>
        <begin position="2186"/>
        <end position="2191"/>
    </location>
</feature>
<feature type="strand" evidence="11">
    <location>
        <begin position="2193"/>
        <end position="2195"/>
    </location>
</feature>
<feature type="strand" evidence="11">
    <location>
        <begin position="2197"/>
        <end position="2206"/>
    </location>
</feature>
<feature type="strand" evidence="11">
    <location>
        <begin position="2209"/>
        <end position="2214"/>
    </location>
</feature>
<feature type="strand" evidence="11">
    <location>
        <begin position="2219"/>
        <end position="2222"/>
    </location>
</feature>
<feature type="strand" evidence="11">
    <location>
        <begin position="2231"/>
        <end position="2242"/>
    </location>
</feature>
<feature type="strand" evidence="11">
    <location>
        <begin position="2248"/>
        <end position="2251"/>
    </location>
</feature>
<feature type="strand" evidence="11">
    <location>
        <begin position="2262"/>
        <end position="2270"/>
    </location>
</feature>
<feature type="strand" evidence="11">
    <location>
        <begin position="2273"/>
        <end position="2282"/>
    </location>
</feature>
<feature type="strand" evidence="11">
    <location>
        <begin position="2286"/>
        <end position="2288"/>
    </location>
</feature>
<feature type="strand" evidence="11">
    <location>
        <begin position="2290"/>
        <end position="2295"/>
    </location>
</feature>
<feature type="strand" evidence="11">
    <location>
        <begin position="2297"/>
        <end position="2302"/>
    </location>
</feature>
<feature type="strand" evidence="11">
    <location>
        <begin position="2304"/>
        <end position="2306"/>
    </location>
</feature>
<feature type="strand" evidence="11">
    <location>
        <begin position="2308"/>
        <end position="2313"/>
    </location>
</feature>
<feature type="strand" evidence="11">
    <location>
        <begin position="2315"/>
        <end position="2317"/>
    </location>
</feature>
<feature type="strand" evidence="11">
    <location>
        <begin position="2319"/>
        <end position="2321"/>
    </location>
</feature>
<feature type="strand" evidence="11">
    <location>
        <begin position="2341"/>
        <end position="2343"/>
    </location>
</feature>
<feature type="strand" evidence="11">
    <location>
        <begin position="2353"/>
        <end position="2361"/>
    </location>
</feature>
<feature type="strand" evidence="11">
    <location>
        <begin position="2374"/>
        <end position="2382"/>
    </location>
</feature>
<feature type="strand" evidence="11">
    <location>
        <begin position="2385"/>
        <end position="2397"/>
    </location>
</feature>
<feature type="helix" evidence="11">
    <location>
        <begin position="2400"/>
        <end position="2402"/>
    </location>
</feature>
<feature type="strand" evidence="11">
    <location>
        <begin position="2405"/>
        <end position="2422"/>
    </location>
</feature>
<feature type="strand" evidence="11">
    <location>
        <begin position="2424"/>
        <end position="2427"/>
    </location>
</feature>
<feature type="strand" evidence="11">
    <location>
        <begin position="2434"/>
        <end position="2437"/>
    </location>
</feature>
<feature type="strand" evidence="11">
    <location>
        <begin position="2442"/>
        <end position="2444"/>
    </location>
</feature>
<feature type="strand" evidence="11">
    <location>
        <begin position="2447"/>
        <end position="2453"/>
    </location>
</feature>
<feature type="strand" evidence="11">
    <location>
        <begin position="2455"/>
        <end position="2459"/>
    </location>
</feature>
<feature type="strand" evidence="11">
    <location>
        <begin position="2477"/>
        <end position="2481"/>
    </location>
</feature>
<feature type="strand" evidence="11">
    <location>
        <begin position="2493"/>
        <end position="2500"/>
    </location>
</feature>
<feature type="strand" evidence="11">
    <location>
        <begin position="2503"/>
        <end position="2510"/>
    </location>
</feature>
<feature type="strand" evidence="11">
    <location>
        <begin position="2518"/>
        <end position="2521"/>
    </location>
</feature>
<feature type="strand" evidence="11">
    <location>
        <begin position="2523"/>
        <end position="2525"/>
    </location>
</feature>
<feature type="strand" evidence="11">
    <location>
        <begin position="2527"/>
        <end position="2531"/>
    </location>
</feature>
<feature type="strand" evidence="11">
    <location>
        <begin position="2551"/>
        <end position="2554"/>
    </location>
</feature>
<feature type="strand" evidence="11">
    <location>
        <begin position="2556"/>
        <end position="2562"/>
    </location>
</feature>
<feature type="strand" evidence="11">
    <location>
        <begin position="2574"/>
        <end position="2578"/>
    </location>
</feature>
<feature type="strand" evidence="11">
    <location>
        <begin position="2581"/>
        <end position="2585"/>
    </location>
</feature>
<feature type="strand" evidence="11">
    <location>
        <begin position="2587"/>
        <end position="2589"/>
    </location>
</feature>
<feature type="strand" evidence="11">
    <location>
        <begin position="2596"/>
        <end position="2599"/>
    </location>
</feature>
<feature type="strand" evidence="11">
    <location>
        <begin position="2605"/>
        <end position="2615"/>
    </location>
</feature>
<feature type="strand" evidence="11">
    <location>
        <begin position="2618"/>
        <end position="2625"/>
    </location>
</feature>
<proteinExistence type="evidence at protein level"/>
<dbReference type="EMBL" id="GL988040">
    <property type="protein sequence ID" value="EGS22501.1"/>
    <property type="molecule type" value="Genomic_DNA"/>
</dbReference>
<dbReference type="RefSeq" id="XP_006692520.1">
    <property type="nucleotide sequence ID" value="XM_006692457.1"/>
</dbReference>
<dbReference type="PDB" id="6CBC">
    <property type="method" value="X-ray"/>
    <property type="resolution" value="3.00 A"/>
    <property type="chains" value="A/B=1-335"/>
</dbReference>
<dbReference type="PDB" id="7U8T">
    <property type="method" value="X-ray"/>
    <property type="resolution" value="3.00 A"/>
    <property type="chains" value="A/B=1944-2635"/>
</dbReference>
<dbReference type="PDBsum" id="6CBC"/>
<dbReference type="PDBsum" id="7U8T"/>
<dbReference type="SMR" id="G0S3B8"/>
<dbReference type="STRING" id="759272.G0S3B8"/>
<dbReference type="GeneID" id="18256083"/>
<dbReference type="KEGG" id="cthr:CTHT_0020450"/>
<dbReference type="eggNOG" id="KOG1809">
    <property type="taxonomic scope" value="Eukaryota"/>
</dbReference>
<dbReference type="HOGENOM" id="CLU_000135_0_0_1"/>
<dbReference type="OMA" id="SGWRPIR"/>
<dbReference type="OrthoDB" id="428159at2759"/>
<dbReference type="Proteomes" id="UP000008066">
    <property type="component" value="Unassembled WGS sequence"/>
</dbReference>
<dbReference type="GO" id="GO:0016020">
    <property type="term" value="C:membrane"/>
    <property type="evidence" value="ECO:0007669"/>
    <property type="project" value="UniProtKB-SubCell"/>
</dbReference>
<dbReference type="GO" id="GO:0005543">
    <property type="term" value="F:phospholipid binding"/>
    <property type="evidence" value="ECO:0000314"/>
    <property type="project" value="UniProtKB"/>
</dbReference>
<dbReference type="GO" id="GO:0120014">
    <property type="term" value="F:phospholipid transfer activity"/>
    <property type="evidence" value="ECO:0000250"/>
    <property type="project" value="UniProtKB"/>
</dbReference>
<dbReference type="GO" id="GO:0120009">
    <property type="term" value="P:intermembrane lipid transfer"/>
    <property type="evidence" value="ECO:0000250"/>
    <property type="project" value="UniProtKB"/>
</dbReference>
<dbReference type="GO" id="GO:0045324">
    <property type="term" value="P:late endosome to vacuole transport"/>
    <property type="evidence" value="ECO:0007669"/>
    <property type="project" value="TreeGrafter"/>
</dbReference>
<dbReference type="GO" id="GO:0007005">
    <property type="term" value="P:mitochondrion organization"/>
    <property type="evidence" value="ECO:0007669"/>
    <property type="project" value="TreeGrafter"/>
</dbReference>
<dbReference type="GO" id="GO:0045053">
    <property type="term" value="P:protein retention in Golgi apparatus"/>
    <property type="evidence" value="ECO:0007669"/>
    <property type="project" value="TreeGrafter"/>
</dbReference>
<dbReference type="GO" id="GO:0006623">
    <property type="term" value="P:protein targeting to vacuole"/>
    <property type="evidence" value="ECO:0007669"/>
    <property type="project" value="TreeGrafter"/>
</dbReference>
<dbReference type="InterPro" id="IPR026847">
    <property type="entry name" value="VPS13"/>
</dbReference>
<dbReference type="InterPro" id="IPR056748">
    <property type="entry name" value="VPS13-like_C"/>
</dbReference>
<dbReference type="InterPro" id="IPR056747">
    <property type="entry name" value="VPS13-like_M"/>
</dbReference>
<dbReference type="InterPro" id="IPR017148">
    <property type="entry name" value="VPS13_fungi"/>
</dbReference>
<dbReference type="InterPro" id="IPR026854">
    <property type="entry name" value="VPS13_N"/>
</dbReference>
<dbReference type="InterPro" id="IPR009543">
    <property type="entry name" value="VPS13_VAB"/>
</dbReference>
<dbReference type="PANTHER" id="PTHR16166:SF93">
    <property type="entry name" value="INTERMEMBRANE LIPID TRANSFER PROTEIN VPS13"/>
    <property type="match status" value="1"/>
</dbReference>
<dbReference type="PANTHER" id="PTHR16166">
    <property type="entry name" value="VACUOLAR PROTEIN SORTING-ASSOCIATED PROTEIN VPS13"/>
    <property type="match status" value="1"/>
</dbReference>
<dbReference type="Pfam" id="PF25037">
    <property type="entry name" value="VPS13_C"/>
    <property type="match status" value="1"/>
</dbReference>
<dbReference type="Pfam" id="PF25033">
    <property type="entry name" value="VPS13_M"/>
    <property type="match status" value="1"/>
</dbReference>
<dbReference type="Pfam" id="PF12624">
    <property type="entry name" value="VPS13_N"/>
    <property type="match status" value="1"/>
</dbReference>
<dbReference type="Pfam" id="PF25036">
    <property type="entry name" value="VPS13_VAB"/>
    <property type="match status" value="1"/>
</dbReference>
<dbReference type="PIRSF" id="PIRSF037235">
    <property type="entry name" value="VPS13_fungi"/>
    <property type="match status" value="1"/>
</dbReference>
<dbReference type="PROSITE" id="PS00214">
    <property type="entry name" value="FABP"/>
    <property type="match status" value="1"/>
</dbReference>
<comment type="function">
    <text evidence="1 4">Mediates the transfer of lipids between membranes at organelle contact sites (By similarity). Binds phospholipids, including phosphatidylcholine (PC), phosphatidylethanolamine (PE), phosphatidic acid (PA), and phosphatidylserine (PS) (PubMed:30093493). May play a role in mitochondrial lipid homeostasis, Golgi vesicle transport, reticulophagy, actin cytoskeleton organization and formation of the prospore membrane (By similarity).</text>
</comment>
<comment type="subcellular location">
    <subcellularLocation>
        <location evidence="6">Membrane</location>
        <topology evidence="6">Peripheral membrane protein</topology>
    </subcellularLocation>
</comment>
<comment type="similarity">
    <text evidence="6">Belongs to the VPS13 family.</text>
</comment>
<keyword id="KW-0002">3D-structure</keyword>
<keyword id="KW-0445">Lipid transport</keyword>
<keyword id="KW-0446">Lipid-binding</keyword>
<keyword id="KW-0472">Membrane</keyword>
<keyword id="KW-1185">Reference proteome</keyword>
<keyword id="KW-0813">Transport</keyword>
<organism evidence="8">
    <name type="scientific">Chaetomium thermophilum (strain DSM 1495 / CBS 144.50 / IMI 039719)</name>
    <name type="common">Thermochaetoides thermophila</name>
    <dbReference type="NCBI Taxonomy" id="759272"/>
    <lineage>
        <taxon>Eukaryota</taxon>
        <taxon>Fungi</taxon>
        <taxon>Dikarya</taxon>
        <taxon>Ascomycota</taxon>
        <taxon>Pezizomycotina</taxon>
        <taxon>Sordariomycetes</taxon>
        <taxon>Sordariomycetidae</taxon>
        <taxon>Sordariales</taxon>
        <taxon>Chaetomiaceae</taxon>
        <taxon>Thermochaetoides</taxon>
    </lineage>
</organism>
<protein>
    <recommendedName>
        <fullName evidence="6">Intermembrane lipid transfer protein VPS13</fullName>
    </recommendedName>
    <alternativeName>
        <fullName evidence="6">Vacuolar protein sorting-associated protein 13</fullName>
    </alternativeName>
</protein>
<gene>
    <name evidence="5" type="primary">VPS13</name>
    <name evidence="7" type="ORF">CTHT_0020450</name>
</gene>
<evidence type="ECO:0000250" key="1">
    <source>
        <dbReference type="UniProtKB" id="Q07878"/>
    </source>
</evidence>
<evidence type="ECO:0000255" key="2"/>
<evidence type="ECO:0000256" key="3">
    <source>
        <dbReference type="SAM" id="MobiDB-lite"/>
    </source>
</evidence>
<evidence type="ECO:0000269" key="4">
    <source>
    </source>
</evidence>
<evidence type="ECO:0000303" key="5">
    <source>
    </source>
</evidence>
<evidence type="ECO:0000305" key="6"/>
<evidence type="ECO:0000312" key="7">
    <source>
        <dbReference type="EMBL" id="EGS22501.1"/>
    </source>
</evidence>
<evidence type="ECO:0000312" key="8">
    <source>
        <dbReference type="Proteomes" id="UP000008066"/>
    </source>
</evidence>
<evidence type="ECO:0007744" key="9">
    <source>
        <dbReference type="PDB" id="6CBC"/>
    </source>
</evidence>
<evidence type="ECO:0007829" key="10">
    <source>
        <dbReference type="PDB" id="6CBC"/>
    </source>
</evidence>
<evidence type="ECO:0007829" key="11">
    <source>
        <dbReference type="PDB" id="7U8T"/>
    </source>
</evidence>
<sequence length="3225" mass="363788">MLEGLVAGLLNRFLGMYVKNFDPKQLKWEVWNGKVRLDNLELQREALDQLKLPINVIKGHLGHLVLHIPWKTLASEQVKINIEDVFLLASPKEEAEYDEDEEARRRHRLKMEKLDSAELLKERSQEGLSEEEQKRTQTFAQALVTKIVDNLQITIRNIHIRYEDAISAPGHPFALGITLEEFSAVSTDSDWTPAFITSIQSAHKLATLESLAIYWDTDAKLIGPGREPHEHSDQIPHDEMLKFFREMIAKGEADLSSEHQFILKPVSGQAKIEIDKTGSHTVPRYKANLLFDEIGVVLDDQQYRDALMMVDLFHYFIRHQEYKKFQPKGVTPKEDPRAWFRFAGNAVLSKIHERNRRWSWDYFRERRDDRRRYIELFKKTKQNIQLTPEEREDLDKLEWKLSYEDLRFWRSLARNQLKKENAEALKNKPPPQPQQQQGWLSWVWGSKPVQPQQEEQQGDENTRITEAQRKELYEVIQWDEKAALAAEIDVPRDSVRLLIETSLSTGSFTLRQNPHGDARDLISLHFDLFRAKGLTRPDSFLIDISLGGFRVNDNTTPDSLYKEIVRVKDAPNTEGQKRYSIADLELTVDEEAFFELQVEQHPLDGQGDVAVTMKLKPLEIIWNPNVVVGIADFFRPPERHMESINALLETANATVEGLRAQTRAGLQFALEEHKTVNAKLDLQAPLIILPESITTPNSTCLIVDAGHISVNSELVDKETMKQVQSTQDRPCTEEDLRRLEELMYDRFLVKLTSTQVLIGPSVEITKQQLVQRDEKRQLHIVDQINLDFVVAMSILPKAPNLTKLKISGHLPVLQVNASDSKYKHLMRIIEVAIPKLYDVEPVLAPSGSHPTIRPRLASDASTRSRRASFRKASTQFLQFVSQQQEIVLDESDSDDDSEKFEDAKDTSVDEQLRIQQRIFDFKFTVDQLRGSLYRSDPEGKHPDQLLVELVAENFGVEYHLRPYDMSAMVSLGSVTMDDFVENPPAEFKSIVSSGDIEDRKQARDLVRVKFVRVKKESPEFMSVYDGIETNVDVAISTINLVVTRKTLLTLLDFILVTFSNPQPAAPVATRMAVTDQESETNIIVQPPPIESGPIRVKVDLKSIRMILNNDGIRLATLSFNHADVGVYILGRYMRVSAKLGDLSLVDDVNLGVSEDSSLRQLVTIQGNELADFRYEYFDPDKPEKNPGYDSSIYLRAGSVKVNFIEEPFRKIVDFLVKFGKMQAIYNAARMAAANQAQQLQQSQSRIKFDIVVKTPIVVFPRVVMSPKPKRDVITAYLGEIYAQNAFVPLDDSEKADMAMKLTTGIRNIRLTSHFHYSEGRDEVLELIDHVDLGFTIIYAEHKEGIKRPDLEIEGSMSDFNLRITPYQLSALLAISQSVPTVFAADVEQHTADAERDVDVATLERARTMPSYSGASEEKVIDMAPELGTHGEAWTKLDLVFTVNTIGLELINAEEDYPVGDLEAASLSRFSLNSSRLKTRMDSNGSLEAEFVIQAFTIYDTRHRETNKFRRIMTSGNSNVDQLMASITMTGGKDRNIIAMVAIDSPRFIFALDYLFAIQKFITIGTTLPEAPIPEKSPMETPEETSDADSVRVGSSGRHSESSAGSGQQLVPVGSQQQQPVLAASEQATTSIAFRVNIVDAQVILIANPLSSSSEAMVLGTKQVVLSQQHSLTFQISECGMFLCRMDRFDDSRLRIIDDFSVKVAVDMSKPNITQVHADIEPLILRLSLRDILLVMQTIAKASELSGGTPSETASKTVAERKAQQLRAAGLKHRTASGKGTSTLATRTRHASQSAASHSGKTTTLVMQEVAKQTQRFEELILTVEGTRMVLLGDVHELPIIDMSVKTFTIHAENWTSNLKAETAFDMYMNVYNFAKSAWEPLIEPWQVGFGITREAKTGVLSVDVTSKKTFDVTITAATIALLSQSFAFFSKEQDVLTKPRGVEAPYRIRNYTGFDVIISTKRQIPGASPTTEQQLPTMTLRLEDGQEAPWSFEEWEKMRESLMTESSTANSISVQLVGSGFQEVKSIRLTREGEFLFGLKPKTQQVLHKLLVEIKLGKDNIKYVTLRSPLLVENDTGIVVELGVYDAHEGHLLKIERINPGESKPAPVGAAYFKSLLVRPDPGFKYGWSSDTLWWRDLLKRPTKTLVCKSEQYGGEVFYFRLHARWDQANPLTRNYPYMRLKLTAPLTIENLLPYDFKYKIYDRVNKQEWNNFLRKGGSIPVHMVDLSHTFLLGIEMQDTPFQASEFVVINTGNADDFKKDSHLVVKDNAGMPLNLRLHYFRIPDGGGSFKVTVYSPYVILNKTGLDVSVRSKGFMQSARAAAGQTLIDVGGDGQKKARPLMFSFHNDDHRNRALLKAGDSEWSKPQSFDAIGSTTEVVLQTANRNAEIHLGVTVDSGQGKYKMVKVVTLAPRYVIHNKLGEDINIREPSSSFWIPLKHGAHRPLHWLQRGAVKQLCLCYPGVDNQWTAPFNISDLGITHLKIARAGQRQRLIRVEILMEDATIFLNLSMEQRNWPFSMRNESDTEFTFYQVNPTIEEDASEDRSGWRPVRYRLPPRSIMPYAWDFPAAKHKEICICAYNKERHVKLQEIGNLMPMKLALPNGESKTIDINVTADGPTQTLILSNYRQSKSLYRQRSNAGSISGREGFEAKEFDTGTTFRATLRLSGIGVSIINTQLKELAYITLRDVQLRYSDSALYQTFSLAVKWIQIDNQLYGGIFPMILYPSVVPKRAQEIDAHPSLHAMVTRVKDESYGVEYIKYATVLLQEMTVELDEDFIYAVLEFSKIPGASWESTQEEDRLCDDSVDVPQPKQQQAGRDIYFEVLNIQPMQLDLSFVRTERVNVEDKTSSRNPVMFFFNVMTMAIGNINDAPVRFNALMLENVRVSIPVLIQNISNHYSQEALYQIHKILGSADFLGNPVGLFNNISSGFADIFYEPYQGLIMSDRPEDFGLGLARGAGSFFKKSVYGFTDSFSKVTGSFAKGLAAATMDKQFQDRRRITRARNRPKHALFGVTAGANSLISSVASGVGGLARKPLEGAEQEGALGFFKGIGKGVVGLATKPAIGVLDFASNISEGVRNTTTVFSSSEASELDRVRLPRHIAADGIVRPYSQREALGQSWLKQVDNGKYFDEAYIGHLELPTEDMVVMVTYARILLIRSRRLQTEWDVPLKDVQTIAKERTGLSLTLRGGTNGPFIPVAQESGRAFLYRMVAVAVEEFNRRFRGLE</sequence>
<name>VPS13_CHATD</name>
<reference evidence="8" key="1">
    <citation type="journal article" date="2011" name="Cell">
        <title>Insight into structure and assembly of the nuclear pore complex by utilizing the genome of a eukaryotic thermophile.</title>
        <authorList>
            <person name="Amlacher S."/>
            <person name="Sarges P."/>
            <person name="Flemming D."/>
            <person name="van Noort V."/>
            <person name="Kunze R."/>
            <person name="Devos D.P."/>
            <person name="Arumugam M."/>
            <person name="Bork P."/>
            <person name="Hurt E."/>
        </authorList>
    </citation>
    <scope>NUCLEOTIDE SEQUENCE [LARGE SCALE GENOMIC DNA]</scope>
    <source>
        <strain evidence="8">DSM 1495 / CBS 144.50 / IMI 039719</strain>
    </source>
</reference>
<reference evidence="9" key="2">
    <citation type="journal article" date="2018" name="J. Cell Biol.">
        <title>VPS13A and VPS13C are lipid transport proteins differentially localized at ER contact sites.</title>
        <authorList>
            <person name="Kumar N."/>
            <person name="Leonzino M."/>
            <person name="Hancock-Cerutti W."/>
            <person name="Horenkamp F.A."/>
            <person name="Li P."/>
            <person name="Lees J.A."/>
            <person name="Wheeler H."/>
            <person name="Reinisch K.M."/>
            <person name="De Camilli P."/>
        </authorList>
    </citation>
    <scope>X-RAY CRYSTALLOGRAPHY (3.00 ANGSTROMS) OF 1-335</scope>
    <scope>FUNCTION</scope>
    <scope>REGION</scope>
</reference>
<accession>G0S3B8</accession>